<keyword id="KW-0227">DNA damage</keyword>
<keyword id="KW-0234">DNA repair</keyword>
<keyword id="KW-0235">DNA replication</keyword>
<keyword id="KW-0238">DNA-binding</keyword>
<keyword id="KW-0239">DNA-directed DNA polymerase</keyword>
<keyword id="KW-0269">Exonuclease</keyword>
<keyword id="KW-0378">Hydrolase</keyword>
<keyword id="KW-0496">Mitochondrion</keyword>
<keyword id="KW-0540">Nuclease</keyword>
<keyword id="KW-0548">Nucleotidyltransferase</keyword>
<keyword id="KW-1185">Reference proteome</keyword>
<keyword id="KW-0808">Transferase</keyword>
<keyword id="KW-0809">Transit peptide</keyword>
<gene>
    <name type="ordered locus">Os08g0175600</name>
    <name type="ordered locus">LOC_Os08g07850</name>
    <name type="ORF">OJ1134_B10.10</name>
    <name type="ORF">OSJNBa0054L03.41</name>
</gene>
<organism>
    <name type="scientific">Oryza sativa subsp. japonica</name>
    <name type="common">Rice</name>
    <dbReference type="NCBI Taxonomy" id="39947"/>
    <lineage>
        <taxon>Eukaryota</taxon>
        <taxon>Viridiplantae</taxon>
        <taxon>Streptophyta</taxon>
        <taxon>Embryophyta</taxon>
        <taxon>Tracheophyta</taxon>
        <taxon>Spermatophyta</taxon>
        <taxon>Magnoliopsida</taxon>
        <taxon>Liliopsida</taxon>
        <taxon>Poales</taxon>
        <taxon>Poaceae</taxon>
        <taxon>BOP clade</taxon>
        <taxon>Oryzoideae</taxon>
        <taxon>Oryzeae</taxon>
        <taxon>Oryzinae</taxon>
        <taxon>Oryza</taxon>
        <taxon>Oryza sativa</taxon>
    </lineage>
</organism>
<name>POLIB_ORYSJ</name>
<feature type="transit peptide" description="Mitochondrion" evidence="2">
    <location>
        <begin position="1"/>
        <end position="42"/>
    </location>
</feature>
<feature type="chain" id="PRO_0000429312" description="DNA polymerase I B, mitochondrial">
    <location>
        <begin position="43"/>
        <end position="1035"/>
    </location>
</feature>
<feature type="domain" description="3'-5' exonuclease">
    <location>
        <begin position="317"/>
        <end position="478"/>
    </location>
</feature>
<feature type="region of interest" description="Disordered" evidence="3">
    <location>
        <begin position="100"/>
        <end position="124"/>
    </location>
</feature>
<feature type="region of interest" description="Polymerase">
    <location>
        <begin position="699"/>
        <end position="1032"/>
    </location>
</feature>
<feature type="compositionally biased region" description="Basic and acidic residues" evidence="3">
    <location>
        <begin position="111"/>
        <end position="120"/>
    </location>
</feature>
<accession>Q6Z4T3</accession>
<accession>Q0J7N8</accession>
<reference key="1">
    <citation type="journal article" date="2005" name="Nature">
        <title>The map-based sequence of the rice genome.</title>
        <authorList>
            <consortium name="International rice genome sequencing project (IRGSP)"/>
        </authorList>
    </citation>
    <scope>NUCLEOTIDE SEQUENCE [LARGE SCALE GENOMIC DNA]</scope>
    <source>
        <strain>cv. Nipponbare</strain>
    </source>
</reference>
<reference key="2">
    <citation type="journal article" date="2008" name="Nucleic Acids Res.">
        <title>The rice annotation project database (RAP-DB): 2008 update.</title>
        <authorList>
            <consortium name="The rice annotation project (RAP)"/>
        </authorList>
    </citation>
    <scope>GENOME REANNOTATION</scope>
    <source>
        <strain>cv. Nipponbare</strain>
    </source>
</reference>
<reference key="3">
    <citation type="journal article" date="2013" name="Rice">
        <title>Improvement of the Oryza sativa Nipponbare reference genome using next generation sequence and optical map data.</title>
        <authorList>
            <person name="Kawahara Y."/>
            <person name="de la Bastide M."/>
            <person name="Hamilton J.P."/>
            <person name="Kanamori H."/>
            <person name="McCombie W.R."/>
            <person name="Ouyang S."/>
            <person name="Schwartz D.C."/>
            <person name="Tanaka T."/>
            <person name="Wu J."/>
            <person name="Zhou S."/>
            <person name="Childs K.L."/>
            <person name="Davidson R.M."/>
            <person name="Lin H."/>
            <person name="Quesada-Ocampo L."/>
            <person name="Vaillancourt B."/>
            <person name="Sakai H."/>
            <person name="Lee S.S."/>
            <person name="Kim J."/>
            <person name="Numa H."/>
            <person name="Itoh T."/>
            <person name="Buell C.R."/>
            <person name="Matsumoto T."/>
        </authorList>
    </citation>
    <scope>GENOME REANNOTATION</scope>
    <source>
        <strain>cv. Nipponbare</strain>
    </source>
</reference>
<dbReference type="EC" id="2.7.7.7"/>
<dbReference type="EMBL" id="AP003882">
    <property type="protein sequence ID" value="BAD05229.1"/>
    <property type="molecule type" value="Genomic_DNA"/>
</dbReference>
<dbReference type="EMBL" id="AP005164">
    <property type="protein sequence ID" value="BAD05556.1"/>
    <property type="molecule type" value="Genomic_DNA"/>
</dbReference>
<dbReference type="EMBL" id="AP008214">
    <property type="protein sequence ID" value="BAF23027.1"/>
    <property type="status" value="ALT_SEQ"/>
    <property type="molecule type" value="Genomic_DNA"/>
</dbReference>
<dbReference type="EMBL" id="AP014964">
    <property type="status" value="NOT_ANNOTATED_CDS"/>
    <property type="molecule type" value="Genomic_DNA"/>
</dbReference>
<dbReference type="RefSeq" id="XP_015650229.1">
    <property type="nucleotide sequence ID" value="XM_015794743.1"/>
</dbReference>
<dbReference type="SMR" id="Q6Z4T3"/>
<dbReference type="FunCoup" id="Q6Z4T3">
    <property type="interactions" value="70"/>
</dbReference>
<dbReference type="STRING" id="39947.Q6Z4T3"/>
<dbReference type="PaxDb" id="39947-Q6Z4T3"/>
<dbReference type="KEGG" id="dosa:Os08g0175600"/>
<dbReference type="InParanoid" id="Q6Z4T3"/>
<dbReference type="OrthoDB" id="275278at2759"/>
<dbReference type="Proteomes" id="UP000000763">
    <property type="component" value="Chromosome 8"/>
</dbReference>
<dbReference type="Proteomes" id="UP000059680">
    <property type="component" value="Chromosome 8"/>
</dbReference>
<dbReference type="GO" id="GO:0005739">
    <property type="term" value="C:mitochondrion"/>
    <property type="evidence" value="ECO:0007669"/>
    <property type="project" value="UniProtKB-SubCell"/>
</dbReference>
<dbReference type="GO" id="GO:0008408">
    <property type="term" value="F:3'-5' exonuclease activity"/>
    <property type="evidence" value="ECO:0007669"/>
    <property type="project" value="InterPro"/>
</dbReference>
<dbReference type="GO" id="GO:0003677">
    <property type="term" value="F:DNA binding"/>
    <property type="evidence" value="ECO:0007669"/>
    <property type="project" value="UniProtKB-KW"/>
</dbReference>
<dbReference type="GO" id="GO:0003887">
    <property type="term" value="F:DNA-directed DNA polymerase activity"/>
    <property type="evidence" value="ECO:0000318"/>
    <property type="project" value="GO_Central"/>
</dbReference>
<dbReference type="GO" id="GO:0006261">
    <property type="term" value="P:DNA-templated DNA replication"/>
    <property type="evidence" value="ECO:0007669"/>
    <property type="project" value="InterPro"/>
</dbReference>
<dbReference type="GO" id="GO:0006302">
    <property type="term" value="P:double-strand break repair"/>
    <property type="evidence" value="ECO:0000318"/>
    <property type="project" value="GO_Central"/>
</dbReference>
<dbReference type="CDD" id="cd08640">
    <property type="entry name" value="DNA_pol_A_plastid_like"/>
    <property type="match status" value="1"/>
</dbReference>
<dbReference type="CDD" id="cd06139">
    <property type="entry name" value="DNA_polA_I_Ecoli_like_exo"/>
    <property type="match status" value="1"/>
</dbReference>
<dbReference type="FunFam" id="1.10.150.20:FF:000034">
    <property type="entry name" value="DNA polymerase I"/>
    <property type="match status" value="1"/>
</dbReference>
<dbReference type="FunFam" id="3.30.420.10:FF:000051">
    <property type="entry name" value="DNA polymerase I"/>
    <property type="match status" value="1"/>
</dbReference>
<dbReference type="Gene3D" id="3.30.70.370">
    <property type="match status" value="1"/>
</dbReference>
<dbReference type="Gene3D" id="1.10.150.20">
    <property type="entry name" value="5' to 3' exonuclease, C-terminal subdomain"/>
    <property type="match status" value="1"/>
</dbReference>
<dbReference type="Gene3D" id="3.30.420.10">
    <property type="entry name" value="Ribonuclease H-like superfamily/Ribonuclease H"/>
    <property type="match status" value="1"/>
</dbReference>
<dbReference type="InterPro" id="IPR002562">
    <property type="entry name" value="3'-5'_exonuclease_dom"/>
</dbReference>
<dbReference type="InterPro" id="IPR001098">
    <property type="entry name" value="DNA-dir_DNA_pol_A_palm_dom"/>
</dbReference>
<dbReference type="InterPro" id="IPR043502">
    <property type="entry name" value="DNA/RNA_pol_sf"/>
</dbReference>
<dbReference type="InterPro" id="IPR002298">
    <property type="entry name" value="DNA_polymerase_A"/>
</dbReference>
<dbReference type="InterPro" id="IPR012337">
    <property type="entry name" value="RNaseH-like_sf"/>
</dbReference>
<dbReference type="InterPro" id="IPR036397">
    <property type="entry name" value="RNaseH_sf"/>
</dbReference>
<dbReference type="PANTHER" id="PTHR10133">
    <property type="entry name" value="DNA POLYMERASE I"/>
    <property type="match status" value="1"/>
</dbReference>
<dbReference type="PANTHER" id="PTHR10133:SF27">
    <property type="entry name" value="DNA POLYMERASE NU"/>
    <property type="match status" value="1"/>
</dbReference>
<dbReference type="Pfam" id="PF00476">
    <property type="entry name" value="DNA_pol_A"/>
    <property type="match status" value="2"/>
</dbReference>
<dbReference type="Pfam" id="PF01612">
    <property type="entry name" value="DNA_pol_A_exo1"/>
    <property type="match status" value="1"/>
</dbReference>
<dbReference type="PRINTS" id="PR00868">
    <property type="entry name" value="DNAPOLI"/>
</dbReference>
<dbReference type="SMART" id="SM00482">
    <property type="entry name" value="POLAc"/>
    <property type="match status" value="1"/>
</dbReference>
<dbReference type="SUPFAM" id="SSF56672">
    <property type="entry name" value="DNA/RNA polymerases"/>
    <property type="match status" value="1"/>
</dbReference>
<dbReference type="SUPFAM" id="SSF53098">
    <property type="entry name" value="Ribonuclease H-like"/>
    <property type="match status" value="1"/>
</dbReference>
<proteinExistence type="inferred from homology"/>
<protein>
    <recommendedName>
        <fullName>DNA polymerase I B, mitochondrial</fullName>
        <ecNumber>2.7.7.7</ecNumber>
    </recommendedName>
    <alternativeName>
        <fullName>DNA polymerase PolI-like B</fullName>
        <shortName>OsPolI-like B</shortName>
    </alternativeName>
    <alternativeName>
        <fullName>DNA polymerase gamma 2</fullName>
    </alternativeName>
</protein>
<evidence type="ECO:0000250" key="1"/>
<evidence type="ECO:0000255" key="2"/>
<evidence type="ECO:0000256" key="3">
    <source>
        <dbReference type="SAM" id="MobiDB-lite"/>
    </source>
</evidence>
<evidence type="ECO:0000305" key="4"/>
<comment type="function">
    <text evidence="1">In addition to polymerase activity, this DNA polymerase exhibits 5'-3' exonuclease activity. May be required for DNA replication and accumulation in mitochondria (By similarity).</text>
</comment>
<comment type="catalytic activity">
    <reaction>
        <text>DNA(n) + a 2'-deoxyribonucleoside 5'-triphosphate = DNA(n+1) + diphosphate</text>
        <dbReference type="Rhea" id="RHEA:22508"/>
        <dbReference type="Rhea" id="RHEA-COMP:17339"/>
        <dbReference type="Rhea" id="RHEA-COMP:17340"/>
        <dbReference type="ChEBI" id="CHEBI:33019"/>
        <dbReference type="ChEBI" id="CHEBI:61560"/>
        <dbReference type="ChEBI" id="CHEBI:173112"/>
        <dbReference type="EC" id="2.7.7.7"/>
    </reaction>
</comment>
<comment type="activity regulation">
    <text evidence="1">Not inhibited by aphidicolin.</text>
</comment>
<comment type="subcellular location">
    <subcellularLocation>
        <location evidence="4">Mitochondrion</location>
    </subcellularLocation>
</comment>
<comment type="similarity">
    <text evidence="4">Belongs to the DNA polymerase type-A family.</text>
</comment>
<comment type="sequence caution" evidence="4">
    <conflict type="erroneous gene model prediction">
        <sequence resource="EMBL-CDS" id="BAF23027"/>
    </conflict>
</comment>
<sequence>MAVAPPLPPAPARLLRRWQGSSPWLSSSFGRTRYFSRPAFAAGGRQDYSPSSGMGVSKTGAFRLGLHGNLNVQSSVQEWVDETKRLFFLRTTNNVRNNITNGTTPLRVGNLRHDPSEDIRSSNYPSLYNQRERGPSNSIVNRHVDTDLAKHRVMYQSAHAVPAPFSVANNDIKPLNLLDGSKEEIPWHDSVTVESSLPKVSKSETTLVVDKAIPNKKEHKRITRKVTLNIPDKASLSTESKNARKLLATIYDKVLVVDNVESARSVVKLLTTKYKGFIHACDTEVANIDVKEETPVGHGEVICFSIYSGNSDGEADFGNGKTCIWVDVLDGGRDVLMEFAPFFEDPSIKKVWHNYSFDSHVIENCGIKVAGFHADTMHLARLWDSSRRADGGYSLEGLTNDHRIMNAVLKDIHKTGKVSMKTIFGRKNVRKNGSEGKTISIEPVKKLQREDRELWICYSSLDSMSTLKLYESLKNKLEAKEWIFDGCPRGTMYDFYEEYWRPFGALLVKMETEGMFVDRAYLSEIEKTAVVERKLAADKFRKWASKHCPDAKYMNVNSDNQIRQLFFGGIKNRNKPGETWPQSKAFKVPNDESIATEGKKIPKSRTIKLFTIVEDLKLFTTEGKKTTKTGWLKVRGDVLWSLAGKIPTDHIYKIDDDGQEFDEDGSSVELPEQDIEDTSPYGTAYEAFGGGKKGREACHAIAALCEVFSIDKLISGFIVPLQGDHISCKEGRIHCSLNINTETGRLSARTPSLQNQPALEKDRYKIRQAFVAAPGNTLIVADYGQLELRILAHLTNCKSMLEAFKAGGDFHSRTAMNMYQHVRDAVEEKKVLLEWHPQPGQDKPPVPLLKDAFGAERRKAKMLNFSIAYGKTAVGLSQDWNVEVREARDTLKLWHRDRKEISAWQKKQKALAFEKCEVYTLLGRSRQFPNMTHAGPGQKSHVERAAINAPVQGSAADVAMCAMLEIERNARLKELGWRLLLQVHDEVILEGPTESAEEAKAIVVECMSKPFYGTNILKVDLAVDAKYAKSWYAAK</sequence>